<gene>
    <name evidence="1" type="primary">rpsH</name>
    <name type="ordered locus">APJL_1809</name>
</gene>
<keyword id="KW-0687">Ribonucleoprotein</keyword>
<keyword id="KW-0689">Ribosomal protein</keyword>
<keyword id="KW-0694">RNA-binding</keyword>
<keyword id="KW-0699">rRNA-binding</keyword>
<proteinExistence type="inferred from homology"/>
<sequence length="130" mass="14098">MSMQDPIADMLTRIRNGQAANKVAISMPSSKLKVAIASVLAEEGYVESFKIVEGSKPELEITLKYFQNKPVVESIQRVSRPGLRIYKRKDELPKVMGGLGIAVVSTSKGVMTDRAARQAGLGGEIICYVA</sequence>
<dbReference type="EMBL" id="CP000687">
    <property type="protein sequence ID" value="ABY70359.1"/>
    <property type="molecule type" value="Genomic_DNA"/>
</dbReference>
<dbReference type="RefSeq" id="WP_005619408.1">
    <property type="nucleotide sequence ID" value="NC_010278.1"/>
</dbReference>
<dbReference type="SMR" id="B0BSU5"/>
<dbReference type="GeneID" id="92743641"/>
<dbReference type="KEGG" id="apj:APJL_1809"/>
<dbReference type="HOGENOM" id="CLU_098428_0_0_6"/>
<dbReference type="Proteomes" id="UP000008547">
    <property type="component" value="Chromosome"/>
</dbReference>
<dbReference type="GO" id="GO:1990904">
    <property type="term" value="C:ribonucleoprotein complex"/>
    <property type="evidence" value="ECO:0007669"/>
    <property type="project" value="UniProtKB-KW"/>
</dbReference>
<dbReference type="GO" id="GO:0005840">
    <property type="term" value="C:ribosome"/>
    <property type="evidence" value="ECO:0007669"/>
    <property type="project" value="UniProtKB-KW"/>
</dbReference>
<dbReference type="GO" id="GO:0019843">
    <property type="term" value="F:rRNA binding"/>
    <property type="evidence" value="ECO:0007669"/>
    <property type="project" value="UniProtKB-UniRule"/>
</dbReference>
<dbReference type="GO" id="GO:0003735">
    <property type="term" value="F:structural constituent of ribosome"/>
    <property type="evidence" value="ECO:0007669"/>
    <property type="project" value="InterPro"/>
</dbReference>
<dbReference type="GO" id="GO:0006412">
    <property type="term" value="P:translation"/>
    <property type="evidence" value="ECO:0007669"/>
    <property type="project" value="UniProtKB-UniRule"/>
</dbReference>
<dbReference type="FunFam" id="3.30.1370.30:FF:000003">
    <property type="entry name" value="30S ribosomal protein S8"/>
    <property type="match status" value="1"/>
</dbReference>
<dbReference type="FunFam" id="3.30.1490.10:FF:000001">
    <property type="entry name" value="30S ribosomal protein S8"/>
    <property type="match status" value="1"/>
</dbReference>
<dbReference type="Gene3D" id="3.30.1370.30">
    <property type="match status" value="1"/>
</dbReference>
<dbReference type="Gene3D" id="3.30.1490.10">
    <property type="match status" value="1"/>
</dbReference>
<dbReference type="HAMAP" id="MF_01302_B">
    <property type="entry name" value="Ribosomal_uS8_B"/>
    <property type="match status" value="1"/>
</dbReference>
<dbReference type="InterPro" id="IPR000630">
    <property type="entry name" value="Ribosomal_uS8"/>
</dbReference>
<dbReference type="InterPro" id="IPR047863">
    <property type="entry name" value="Ribosomal_uS8_CS"/>
</dbReference>
<dbReference type="InterPro" id="IPR035987">
    <property type="entry name" value="Ribosomal_uS8_sf"/>
</dbReference>
<dbReference type="NCBIfam" id="NF001109">
    <property type="entry name" value="PRK00136.1"/>
    <property type="match status" value="1"/>
</dbReference>
<dbReference type="PANTHER" id="PTHR11758">
    <property type="entry name" value="40S RIBOSOMAL PROTEIN S15A"/>
    <property type="match status" value="1"/>
</dbReference>
<dbReference type="Pfam" id="PF00410">
    <property type="entry name" value="Ribosomal_S8"/>
    <property type="match status" value="1"/>
</dbReference>
<dbReference type="SUPFAM" id="SSF56047">
    <property type="entry name" value="Ribosomal protein S8"/>
    <property type="match status" value="1"/>
</dbReference>
<dbReference type="PROSITE" id="PS00053">
    <property type="entry name" value="RIBOSOMAL_S8"/>
    <property type="match status" value="1"/>
</dbReference>
<reference key="1">
    <citation type="journal article" date="2008" name="PLoS ONE">
        <title>Genome biology of Actinobacillus pleuropneumoniae JL03, an isolate of serotype 3 prevalent in China.</title>
        <authorList>
            <person name="Xu Z."/>
            <person name="Zhou Y."/>
            <person name="Li L."/>
            <person name="Zhou R."/>
            <person name="Xiao S."/>
            <person name="Wan Y."/>
            <person name="Zhang S."/>
            <person name="Wang K."/>
            <person name="Li W."/>
            <person name="Li L."/>
            <person name="Jin H."/>
            <person name="Kang M."/>
            <person name="Dalai B."/>
            <person name="Li T."/>
            <person name="Liu L."/>
            <person name="Cheng Y."/>
            <person name="Zhang L."/>
            <person name="Xu T."/>
            <person name="Zheng H."/>
            <person name="Pu S."/>
            <person name="Wang B."/>
            <person name="Gu W."/>
            <person name="Zhang X.L."/>
            <person name="Zhu G.-F."/>
            <person name="Wang S."/>
            <person name="Zhao G.-P."/>
            <person name="Chen H."/>
        </authorList>
    </citation>
    <scope>NUCLEOTIDE SEQUENCE [LARGE SCALE GENOMIC DNA]</scope>
    <source>
        <strain>JL03</strain>
    </source>
</reference>
<accession>B0BSU5</accession>
<organism>
    <name type="scientific">Actinobacillus pleuropneumoniae serotype 3 (strain JL03)</name>
    <dbReference type="NCBI Taxonomy" id="434271"/>
    <lineage>
        <taxon>Bacteria</taxon>
        <taxon>Pseudomonadati</taxon>
        <taxon>Pseudomonadota</taxon>
        <taxon>Gammaproteobacteria</taxon>
        <taxon>Pasteurellales</taxon>
        <taxon>Pasteurellaceae</taxon>
        <taxon>Actinobacillus</taxon>
    </lineage>
</organism>
<evidence type="ECO:0000255" key="1">
    <source>
        <dbReference type="HAMAP-Rule" id="MF_01302"/>
    </source>
</evidence>
<evidence type="ECO:0000305" key="2"/>
<comment type="function">
    <text evidence="1">One of the primary rRNA binding proteins, it binds directly to 16S rRNA central domain where it helps coordinate assembly of the platform of the 30S subunit.</text>
</comment>
<comment type="subunit">
    <text evidence="1">Part of the 30S ribosomal subunit. Contacts proteins S5 and S12.</text>
</comment>
<comment type="similarity">
    <text evidence="1">Belongs to the universal ribosomal protein uS8 family.</text>
</comment>
<name>RS8_ACTPJ</name>
<protein>
    <recommendedName>
        <fullName evidence="1">Small ribosomal subunit protein uS8</fullName>
    </recommendedName>
    <alternativeName>
        <fullName evidence="2">30S ribosomal protein S8</fullName>
    </alternativeName>
</protein>
<feature type="chain" id="PRO_1000140502" description="Small ribosomal subunit protein uS8">
    <location>
        <begin position="1"/>
        <end position="130"/>
    </location>
</feature>